<sequence>ADNRRPIWNLGHMVNAVKQIPTFLNDGANAIEADITFKGAVPTYSYHGTPCDFGRDCIRWEYFDVFLRTLREYTTPGNSKYREKFILFVLDLKTGSLNNHEVRKAGENVAKGLLENYWNNGNNGGRAYVVLSLPDIAHYEFIRTFKEVLKTAGHENLLDKVGYDLSGPYWPSLPSLDSVHEAFKKAGVDGHVWLSDGLTNWAKLGDMARLKEIIKSRDSENGFISKVYYWSVDKYSTTRTALDVGVDGIMTNYPYVIIDVLNENGYKDKYRLATYDDNPWETFKN</sequence>
<protein>
    <recommendedName>
        <fullName>Dermonecrotic toxin LlSicTox-alphaIII2</fullName>
        <ecNumber evidence="4">4.6.1.-</ecNumber>
    </recommendedName>
    <alternativeName>
        <fullName evidence="7">Ll2</fullName>
    </alternativeName>
    <alternativeName>
        <fullName>Phospholipase D</fullName>
        <shortName>PLD</shortName>
    </alternativeName>
    <alternativeName>
        <fullName>Sphingomyelin phosphodiesterase D 2</fullName>
        <shortName>SMD 2</shortName>
        <shortName>SMase D 2</shortName>
        <shortName>Sphingomyelinase D 2</shortName>
    </alternativeName>
</protein>
<feature type="chain" id="PRO_0000279580" description="Dermonecrotic toxin LlSicTox-alphaIII2">
    <location>
        <begin position="1"/>
        <end position="285"/>
    </location>
</feature>
<feature type="active site" evidence="5">
    <location>
        <position position="12"/>
    </location>
</feature>
<feature type="active site" description="Nucleophile" evidence="5">
    <location>
        <position position="47"/>
    </location>
</feature>
<feature type="binding site" evidence="5">
    <location>
        <position position="32"/>
    </location>
    <ligand>
        <name>Mg(2+)</name>
        <dbReference type="ChEBI" id="CHEBI:18420"/>
    </ligand>
</feature>
<feature type="binding site" evidence="5">
    <location>
        <position position="34"/>
    </location>
    <ligand>
        <name>Mg(2+)</name>
        <dbReference type="ChEBI" id="CHEBI:18420"/>
    </ligand>
</feature>
<feature type="binding site" evidence="5">
    <location>
        <position position="91"/>
    </location>
    <ligand>
        <name>Mg(2+)</name>
        <dbReference type="ChEBI" id="CHEBI:18420"/>
    </ligand>
</feature>
<feature type="disulfide bond" evidence="5">
    <location>
        <begin position="51"/>
        <end position="57"/>
    </location>
</feature>
<comment type="function">
    <text evidence="1 3 6">Dermonecrotic toxins cleave the phosphodiester linkage between the phosphate and headgroup of certain phospholipids (sphingolipid and lysolipid substrates), forming an alcohol (often choline) and a cyclic phosphate (By similarity). This toxin acts on sphingomyelin (SM) (228.2 U/mg) (PubMed:16759681). It may also act on ceramide phosphoethanolamine (CPE), lysophosphatidylcholine (LPC) and lysophosphatidylethanolamine (LPE), but not on lysophosphatidylserine (LPS), and lysophosphatidylglycerol (LPG) (By similarity). It acts by transphosphatidylation, releasing exclusively cyclic phosphate products as second products (By similarity). Induces dermonecrosis, hemolysis, increased vascular permeability, edema, inflammatory response, and platelet aggregation (By similarity). Is lethal to mice (PubMed:16759681).</text>
</comment>
<comment type="catalytic activity">
    <reaction evidence="9">
        <text>an N-(acyl)-sphingosylphosphocholine = an N-(acyl)-sphingosyl-1,3-cyclic phosphate + choline</text>
        <dbReference type="Rhea" id="RHEA:60652"/>
        <dbReference type="ChEBI" id="CHEBI:15354"/>
        <dbReference type="ChEBI" id="CHEBI:64583"/>
        <dbReference type="ChEBI" id="CHEBI:143892"/>
    </reaction>
</comment>
<comment type="catalytic activity">
    <reaction evidence="1">
        <text>an N-(acyl)-sphingosylphosphoethanolamine = an N-(acyl)-sphingosyl-1,3-cyclic phosphate + ethanolamine</text>
        <dbReference type="Rhea" id="RHEA:60648"/>
        <dbReference type="ChEBI" id="CHEBI:57603"/>
        <dbReference type="ChEBI" id="CHEBI:143891"/>
        <dbReference type="ChEBI" id="CHEBI:143892"/>
    </reaction>
</comment>
<comment type="catalytic activity">
    <reaction evidence="1">
        <text>a 1-acyl-sn-glycero-3-phosphocholine = a 1-acyl-sn-glycero-2,3-cyclic phosphate + choline</text>
        <dbReference type="Rhea" id="RHEA:60700"/>
        <dbReference type="ChEBI" id="CHEBI:15354"/>
        <dbReference type="ChEBI" id="CHEBI:58168"/>
        <dbReference type="ChEBI" id="CHEBI:143947"/>
    </reaction>
</comment>
<comment type="catalytic activity">
    <reaction evidence="1">
        <text>a 1-acyl-sn-glycero-3-phosphoethanolamine = a 1-acyl-sn-glycero-2,3-cyclic phosphate + ethanolamine</text>
        <dbReference type="Rhea" id="RHEA:60704"/>
        <dbReference type="ChEBI" id="CHEBI:57603"/>
        <dbReference type="ChEBI" id="CHEBI:64381"/>
        <dbReference type="ChEBI" id="CHEBI:143947"/>
    </reaction>
</comment>
<comment type="cofactor">
    <cofactor evidence="5">
        <name>Mg(2+)</name>
        <dbReference type="ChEBI" id="CHEBI:18420"/>
    </cofactor>
    <text evidence="5">Binds 1 Mg(2+) ion per subunit.</text>
</comment>
<comment type="subcellular location">
    <subcellularLocation>
        <location evidence="9">Secreted</location>
    </subcellularLocation>
</comment>
<comment type="tissue specificity">
    <text evidence="9">Expressed by the venom gland.</text>
</comment>
<comment type="toxic dose">
    <text evidence="6">LD(50) is 118.5 by intraperitoneal injection into mice.</text>
</comment>
<comment type="similarity">
    <text evidence="8">Belongs to the arthropod phospholipase D family. Class I subfamily.</text>
</comment>
<comment type="caution">
    <text evidence="1 2 4">The most common activity assay for dermonecrotic toxins detects enzymatic activity by monitoring choline release from substrate. Liberation of choline from sphingomyelin (SM) or lysophosphatidylcholine (LPC) is commonly assumed to result from substrate hydrolysis, giving either ceramide-1-phosphate (C1P) or lysophosphatidic acid (LPA), respectively, as a second product. However, two studies from Lajoie and colleagues (2013 and 2015) report the observation of exclusive formation of cyclic phosphate products as second products, resulting from intramolecular transphosphatidylation. Cyclic phosphates have vastly different biological properties from their monoester counterparts, and they may be relevant to the pathology of brown spider envenomation.</text>
</comment>
<proteinExistence type="evidence at protein level"/>
<accession>Q1KY79</accession>
<organism>
    <name type="scientific">Loxosceles laeta</name>
    <name type="common">South American recluse spider</name>
    <name type="synonym">Scytodes laeta</name>
    <dbReference type="NCBI Taxonomy" id="58217"/>
    <lineage>
        <taxon>Eukaryota</taxon>
        <taxon>Metazoa</taxon>
        <taxon>Ecdysozoa</taxon>
        <taxon>Arthropoda</taxon>
        <taxon>Chelicerata</taxon>
        <taxon>Arachnida</taxon>
        <taxon>Araneae</taxon>
        <taxon>Araneomorphae</taxon>
        <taxon>Haplogynae</taxon>
        <taxon>Scytodoidea</taxon>
        <taxon>Sicariidae</taxon>
        <taxon>Loxosceles</taxon>
    </lineage>
</organism>
<dbReference type="EC" id="4.6.1.-" evidence="4"/>
<dbReference type="EMBL" id="DQ370000">
    <property type="protein sequence ID" value="ABD15448.1"/>
    <property type="molecule type" value="mRNA"/>
</dbReference>
<dbReference type="SMR" id="Q1KY79"/>
<dbReference type="ArachnoServer" id="AS000150">
    <property type="toxin name" value="Sphingomyelinase D (LlSicTox-alphaIII2)"/>
</dbReference>
<dbReference type="BRENDA" id="3.1.4.41">
    <property type="organism ID" value="6922"/>
</dbReference>
<dbReference type="GO" id="GO:0005576">
    <property type="term" value="C:extracellular region"/>
    <property type="evidence" value="ECO:0007669"/>
    <property type="project" value="UniProtKB-SubCell"/>
</dbReference>
<dbReference type="GO" id="GO:0016829">
    <property type="term" value="F:lyase activity"/>
    <property type="evidence" value="ECO:0007669"/>
    <property type="project" value="UniProtKB-KW"/>
</dbReference>
<dbReference type="GO" id="GO:0046872">
    <property type="term" value="F:metal ion binding"/>
    <property type="evidence" value="ECO:0007669"/>
    <property type="project" value="UniProtKB-KW"/>
</dbReference>
<dbReference type="GO" id="GO:0008081">
    <property type="term" value="F:phosphoric diester hydrolase activity"/>
    <property type="evidence" value="ECO:0007669"/>
    <property type="project" value="InterPro"/>
</dbReference>
<dbReference type="GO" id="GO:0090729">
    <property type="term" value="F:toxin activity"/>
    <property type="evidence" value="ECO:0007669"/>
    <property type="project" value="UniProtKB-KW"/>
</dbReference>
<dbReference type="GO" id="GO:0031640">
    <property type="term" value="P:killing of cells of another organism"/>
    <property type="evidence" value="ECO:0007669"/>
    <property type="project" value="UniProtKB-KW"/>
</dbReference>
<dbReference type="GO" id="GO:0016042">
    <property type="term" value="P:lipid catabolic process"/>
    <property type="evidence" value="ECO:0007669"/>
    <property type="project" value="UniProtKB-KW"/>
</dbReference>
<dbReference type="CDD" id="cd08576">
    <property type="entry name" value="GDPD_like_SMaseD_PLD"/>
    <property type="match status" value="1"/>
</dbReference>
<dbReference type="Gene3D" id="3.20.20.190">
    <property type="entry name" value="Phosphatidylinositol (PI) phosphodiesterase"/>
    <property type="match status" value="1"/>
</dbReference>
<dbReference type="InterPro" id="IPR017946">
    <property type="entry name" value="PLC-like_Pdiesterase_TIM-brl"/>
</dbReference>
<dbReference type="SUPFAM" id="SSF51695">
    <property type="entry name" value="PLC-like phosphodiesterases"/>
    <property type="match status" value="1"/>
</dbReference>
<evidence type="ECO:0000250" key="1">
    <source>
        <dbReference type="UniProtKB" id="A0A0D4WTV1"/>
    </source>
</evidence>
<evidence type="ECO:0000250" key="2">
    <source>
        <dbReference type="UniProtKB" id="A0A0D4WV12"/>
    </source>
</evidence>
<evidence type="ECO:0000250" key="3">
    <source>
        <dbReference type="UniProtKB" id="P0CE80"/>
    </source>
</evidence>
<evidence type="ECO:0000250" key="4">
    <source>
        <dbReference type="UniProtKB" id="Q4ZFU2"/>
    </source>
</evidence>
<evidence type="ECO:0000250" key="5">
    <source>
        <dbReference type="UniProtKB" id="Q8I914"/>
    </source>
</evidence>
<evidence type="ECO:0000269" key="6">
    <source>
    </source>
</evidence>
<evidence type="ECO:0000303" key="7">
    <source>
    </source>
</evidence>
<evidence type="ECO:0000305" key="8"/>
<evidence type="ECO:0000305" key="9">
    <source>
    </source>
</evidence>
<reference key="1">
    <citation type="journal article" date="2006" name="Toxicon">
        <title>North and south american Loxosceles spiders: development of a polyvalent antivenom with recombinant sphingomyelinases D as antigens.</title>
        <authorList>
            <person name="Olvera A."/>
            <person name="Ramos-Cerrillo B."/>
            <person name="Estevez J."/>
            <person name="Clement H."/>
            <person name="de Roodt A."/>
            <person name="Paniagua-Solis J."/>
            <person name="Vazquez H."/>
            <person name="Zavaleta A."/>
            <person name="Arruz M.S."/>
            <person name="Stock R.P."/>
            <person name="Alagon A."/>
        </authorList>
    </citation>
    <scope>NUCLEOTIDE SEQUENCE [MRNA]</scope>
    <scope>FUNCTION</scope>
    <scope>TOXIC DOSE</scope>
    <scope>CATALYTIC ACTIVITY</scope>
    <source>
        <tissue>Venom gland</tissue>
    </source>
</reference>
<keyword id="KW-0204">Cytolysis</keyword>
<keyword id="KW-1061">Dermonecrotic toxin</keyword>
<keyword id="KW-1015">Disulfide bond</keyword>
<keyword id="KW-0354">Hemolysis</keyword>
<keyword id="KW-0442">Lipid degradation</keyword>
<keyword id="KW-0443">Lipid metabolism</keyword>
<keyword id="KW-0456">Lyase</keyword>
<keyword id="KW-0460">Magnesium</keyword>
<keyword id="KW-0479">Metal-binding</keyword>
<keyword id="KW-0964">Secreted</keyword>
<keyword id="KW-0800">Toxin</keyword>
<name>A32_LOXLA</name>